<protein>
    <recommendedName>
        <fullName>Conotoxin 12</fullName>
    </recommendedName>
</protein>
<evidence type="ECO:0000250" key="1"/>
<evidence type="ECO:0000255" key="2"/>
<evidence type="ECO:0000305" key="3"/>
<sequence length="79" mass="8519">MKLTCVLIITVLFLTASQLITADYSRDQRQYRAVRLGDEMRNFKGARDCGGQGKGCYTQPCCPGLRCRGGGTGGGVCQP</sequence>
<keyword id="KW-1015">Disulfide bond</keyword>
<keyword id="KW-0960">Knottin</keyword>
<keyword id="KW-0964">Secreted</keyword>
<keyword id="KW-0732">Signal</keyword>
<keyword id="KW-0800">Toxin</keyword>
<reference key="1">
    <citation type="journal article" date="2005" name="Peptides">
        <title>Direct cDNA cloning of novel conopeptide precursors of the O-superfamily.</title>
        <authorList>
            <person name="Kauferstein S."/>
            <person name="Melaun C."/>
            <person name="Mebs D."/>
        </authorList>
    </citation>
    <scope>NUCLEOTIDE SEQUENCE [MRNA]</scope>
    <source>
        <tissue>Venom duct</tissue>
    </source>
</reference>
<comment type="subcellular location">
    <subcellularLocation>
        <location evidence="1">Secreted</location>
    </subcellularLocation>
</comment>
<comment type="tissue specificity">
    <text>Expressed by the venom duct.</text>
</comment>
<comment type="domain">
    <text evidence="1">The presence of a 'disulfide through disulfide knot' structurally defines this protein as a knottin.</text>
</comment>
<comment type="domain">
    <text>The cysteine framework is VI/VII (C-C-CC-C-C).</text>
</comment>
<comment type="similarity">
    <text evidence="3">Belongs to the conotoxin O1 superfamily.</text>
</comment>
<feature type="signal peptide" evidence="2">
    <location>
        <begin position="1"/>
        <end position="22"/>
    </location>
</feature>
<feature type="propeptide" id="PRO_0000035007" evidence="1">
    <location>
        <begin position="23"/>
        <end position="47"/>
    </location>
</feature>
<feature type="peptide" id="PRO_0000035008" description="Conotoxin 12">
    <location>
        <begin position="48"/>
        <end position="79"/>
    </location>
</feature>
<feature type="disulfide bond" evidence="1">
    <location>
        <begin position="49"/>
        <end position="62"/>
    </location>
</feature>
<feature type="disulfide bond" evidence="1">
    <location>
        <begin position="56"/>
        <end position="67"/>
    </location>
</feature>
<feature type="disulfide bond" evidence="1">
    <location>
        <begin position="61"/>
        <end position="77"/>
    </location>
</feature>
<organism>
    <name type="scientific">Conus vexillum</name>
    <name type="common">Flag cone</name>
    <dbReference type="NCBI Taxonomy" id="89431"/>
    <lineage>
        <taxon>Eukaryota</taxon>
        <taxon>Metazoa</taxon>
        <taxon>Spiralia</taxon>
        <taxon>Lophotrochozoa</taxon>
        <taxon>Mollusca</taxon>
        <taxon>Gastropoda</taxon>
        <taxon>Caenogastropoda</taxon>
        <taxon>Neogastropoda</taxon>
        <taxon>Conoidea</taxon>
        <taxon>Conidae</taxon>
        <taxon>Conus</taxon>
        <taxon>Rhizoconus</taxon>
    </lineage>
</organism>
<dbReference type="EMBL" id="AJ851178">
    <property type="protein sequence ID" value="CAH64851.1"/>
    <property type="molecule type" value="mRNA"/>
</dbReference>
<dbReference type="SMR" id="Q5K0D0"/>
<dbReference type="ConoServer" id="1067">
    <property type="toxin name" value="Conotoxin-12 precursor"/>
</dbReference>
<dbReference type="GO" id="GO:0005576">
    <property type="term" value="C:extracellular region"/>
    <property type="evidence" value="ECO:0007669"/>
    <property type="project" value="UniProtKB-SubCell"/>
</dbReference>
<dbReference type="GO" id="GO:0008200">
    <property type="term" value="F:ion channel inhibitor activity"/>
    <property type="evidence" value="ECO:0007669"/>
    <property type="project" value="InterPro"/>
</dbReference>
<dbReference type="GO" id="GO:0090729">
    <property type="term" value="F:toxin activity"/>
    <property type="evidence" value="ECO:0007669"/>
    <property type="project" value="UniProtKB-KW"/>
</dbReference>
<dbReference type="InterPro" id="IPR004214">
    <property type="entry name" value="Conotoxin"/>
</dbReference>
<dbReference type="Pfam" id="PF02950">
    <property type="entry name" value="Conotoxin"/>
    <property type="match status" value="1"/>
</dbReference>
<proteinExistence type="evidence at transcript level"/>
<accession>Q5K0D0</accession>
<name>O16C_CONVX</name>